<name>RS3A1_YEAST</name>
<evidence type="ECO:0000250" key="1">
    <source>
        <dbReference type="UniProtKB" id="P23248"/>
    </source>
</evidence>
<evidence type="ECO:0000255" key="2">
    <source>
        <dbReference type="HAMAP-Rule" id="MF_03122"/>
    </source>
</evidence>
<evidence type="ECO:0000256" key="3">
    <source>
        <dbReference type="SAM" id="MobiDB-lite"/>
    </source>
</evidence>
<evidence type="ECO:0000269" key="4">
    <source>
    </source>
</evidence>
<evidence type="ECO:0000269" key="5">
    <source>
    </source>
</evidence>
<evidence type="ECO:0000269" key="6">
    <source>
    </source>
</evidence>
<evidence type="ECO:0000269" key="7">
    <source>
    </source>
</evidence>
<evidence type="ECO:0000303" key="8">
    <source>
    </source>
</evidence>
<evidence type="ECO:0000303" key="9">
    <source>
    </source>
</evidence>
<evidence type="ECO:0000305" key="10"/>
<evidence type="ECO:0000305" key="11">
    <source>
    </source>
</evidence>
<evidence type="ECO:0000305" key="12">
    <source>
    </source>
</evidence>
<evidence type="ECO:0007744" key="13">
    <source>
    </source>
</evidence>
<evidence type="ECO:0007744" key="14">
    <source>
    </source>
</evidence>
<evidence type="ECO:0007744" key="15">
    <source>
    </source>
</evidence>
<evidence type="ECO:0007829" key="16">
    <source>
        <dbReference type="PDB" id="6ZVI"/>
    </source>
</evidence>
<evidence type="ECO:0007829" key="17">
    <source>
        <dbReference type="PDB" id="7A1G"/>
    </source>
</evidence>
<evidence type="ECO:0007829" key="18">
    <source>
        <dbReference type="PDB" id="8C01"/>
    </source>
</evidence>
<dbReference type="EMBL" id="X65802">
    <property type="protein sequence ID" value="CAA46676.1"/>
    <property type="molecule type" value="Genomic_DNA"/>
</dbReference>
<dbReference type="EMBL" id="X68556">
    <property type="protein sequence ID" value="CAA48559.1"/>
    <property type="molecule type" value="Genomic_DNA"/>
</dbReference>
<dbReference type="EMBL" id="U21094">
    <property type="protein sequence ID" value="AAB67521.1"/>
    <property type="molecule type" value="Genomic_DNA"/>
</dbReference>
<dbReference type="EMBL" id="AY693148">
    <property type="protein sequence ID" value="AAT93167.1"/>
    <property type="molecule type" value="Genomic_DNA"/>
</dbReference>
<dbReference type="EMBL" id="X01420">
    <property type="status" value="NOT_ANNOTATED_CDS"/>
    <property type="molecule type" value="Genomic_DNA"/>
</dbReference>
<dbReference type="EMBL" id="BK006945">
    <property type="protein sequence ID" value="DAA09742.1"/>
    <property type="molecule type" value="Genomic_DNA"/>
</dbReference>
<dbReference type="PIR" id="S21121">
    <property type="entry name" value="S21121"/>
</dbReference>
<dbReference type="RefSeq" id="NP_013546.1">
    <property type="nucleotide sequence ID" value="NM_001182329.1"/>
</dbReference>
<dbReference type="PDB" id="3J6X">
    <property type="method" value="EM"/>
    <property type="resolution" value="6.10 A"/>
    <property type="chains" value="S1=1-255"/>
</dbReference>
<dbReference type="PDB" id="3J6Y">
    <property type="method" value="EM"/>
    <property type="resolution" value="6.10 A"/>
    <property type="chains" value="S1=1-255"/>
</dbReference>
<dbReference type="PDB" id="3J77">
    <property type="method" value="EM"/>
    <property type="resolution" value="6.20 A"/>
    <property type="chains" value="S1=1-255"/>
</dbReference>
<dbReference type="PDB" id="3J78">
    <property type="method" value="EM"/>
    <property type="resolution" value="6.30 A"/>
    <property type="chains" value="S1=1-255"/>
</dbReference>
<dbReference type="PDB" id="4U3M">
    <property type="method" value="X-ray"/>
    <property type="resolution" value="3.00 A"/>
    <property type="chains" value="S1/s1=2-255"/>
</dbReference>
<dbReference type="PDB" id="4U3N">
    <property type="method" value="X-ray"/>
    <property type="resolution" value="3.20 A"/>
    <property type="chains" value="S1/s1=2-255"/>
</dbReference>
<dbReference type="PDB" id="4U3U">
    <property type="method" value="X-ray"/>
    <property type="resolution" value="2.90 A"/>
    <property type="chains" value="S1/s1=2-255"/>
</dbReference>
<dbReference type="PDB" id="4U4N">
    <property type="method" value="X-ray"/>
    <property type="resolution" value="3.10 A"/>
    <property type="chains" value="S1/s1=2-255"/>
</dbReference>
<dbReference type="PDB" id="4U4O">
    <property type="method" value="X-ray"/>
    <property type="resolution" value="3.60 A"/>
    <property type="chains" value="S1/s1=2-255"/>
</dbReference>
<dbReference type="PDB" id="4U4Q">
    <property type="method" value="X-ray"/>
    <property type="resolution" value="3.00 A"/>
    <property type="chains" value="S1/s1=2-255"/>
</dbReference>
<dbReference type="PDB" id="4U4R">
    <property type="method" value="X-ray"/>
    <property type="resolution" value="2.80 A"/>
    <property type="chains" value="S1/s1=2-255"/>
</dbReference>
<dbReference type="PDB" id="4U4U">
    <property type="method" value="X-ray"/>
    <property type="resolution" value="3.00 A"/>
    <property type="chains" value="S1/s1=2-255"/>
</dbReference>
<dbReference type="PDB" id="4U4Y">
    <property type="method" value="X-ray"/>
    <property type="resolution" value="3.20 A"/>
    <property type="chains" value="S1/s1=2-255"/>
</dbReference>
<dbReference type="PDB" id="4U4Z">
    <property type="method" value="X-ray"/>
    <property type="resolution" value="3.10 A"/>
    <property type="chains" value="S1/s1=2-255"/>
</dbReference>
<dbReference type="PDB" id="4U50">
    <property type="method" value="X-ray"/>
    <property type="resolution" value="3.20 A"/>
    <property type="chains" value="S1/s1=2-255"/>
</dbReference>
<dbReference type="PDB" id="4U51">
    <property type="method" value="X-ray"/>
    <property type="resolution" value="3.20 A"/>
    <property type="chains" value="S1/s1=2-255"/>
</dbReference>
<dbReference type="PDB" id="4U52">
    <property type="method" value="X-ray"/>
    <property type="resolution" value="3.00 A"/>
    <property type="chains" value="S1/s1=2-255"/>
</dbReference>
<dbReference type="PDB" id="4U53">
    <property type="method" value="X-ray"/>
    <property type="resolution" value="3.30 A"/>
    <property type="chains" value="S1/s1=2-255"/>
</dbReference>
<dbReference type="PDB" id="4U55">
    <property type="method" value="X-ray"/>
    <property type="resolution" value="3.20 A"/>
    <property type="chains" value="S1/s1=2-255"/>
</dbReference>
<dbReference type="PDB" id="4U56">
    <property type="method" value="X-ray"/>
    <property type="resolution" value="3.45 A"/>
    <property type="chains" value="S1/s1=2-255"/>
</dbReference>
<dbReference type="PDB" id="4U6F">
    <property type="method" value="X-ray"/>
    <property type="resolution" value="3.10 A"/>
    <property type="chains" value="S1/s1=2-255"/>
</dbReference>
<dbReference type="PDB" id="4V88">
    <property type="method" value="X-ray"/>
    <property type="resolution" value="3.00 A"/>
    <property type="chains" value="AB/CB=1-255"/>
</dbReference>
<dbReference type="PDB" id="4V8Y">
    <property type="method" value="EM"/>
    <property type="resolution" value="4.30 A"/>
    <property type="chains" value="AB=1-255"/>
</dbReference>
<dbReference type="PDB" id="4V8Z">
    <property type="method" value="EM"/>
    <property type="resolution" value="6.60 A"/>
    <property type="chains" value="AB=1-255"/>
</dbReference>
<dbReference type="PDB" id="4V92">
    <property type="method" value="EM"/>
    <property type="resolution" value="3.70 A"/>
    <property type="chains" value="B=21-233"/>
</dbReference>
<dbReference type="PDB" id="5DAT">
    <property type="method" value="X-ray"/>
    <property type="resolution" value="3.15 A"/>
    <property type="chains" value="S1/s1=2-255"/>
</dbReference>
<dbReference type="PDB" id="5DC3">
    <property type="method" value="X-ray"/>
    <property type="resolution" value="3.25 A"/>
    <property type="chains" value="S1/s1=2-255"/>
</dbReference>
<dbReference type="PDB" id="5DGE">
    <property type="method" value="X-ray"/>
    <property type="resolution" value="3.45 A"/>
    <property type="chains" value="S1/s1=2-255"/>
</dbReference>
<dbReference type="PDB" id="5DGF">
    <property type="method" value="X-ray"/>
    <property type="resolution" value="3.30 A"/>
    <property type="chains" value="S1/s1=2-255"/>
</dbReference>
<dbReference type="PDB" id="5DGV">
    <property type="method" value="X-ray"/>
    <property type="resolution" value="3.10 A"/>
    <property type="chains" value="S1/s1=2-255"/>
</dbReference>
<dbReference type="PDB" id="5FCI">
    <property type="method" value="X-ray"/>
    <property type="resolution" value="3.40 A"/>
    <property type="chains" value="S1/s1=2-255"/>
</dbReference>
<dbReference type="PDB" id="5FCJ">
    <property type="method" value="X-ray"/>
    <property type="resolution" value="3.10 A"/>
    <property type="chains" value="S1/s1=2-255"/>
</dbReference>
<dbReference type="PDB" id="5I4L">
    <property type="method" value="X-ray"/>
    <property type="resolution" value="3.10 A"/>
    <property type="chains" value="S1/s1=20-235"/>
</dbReference>
<dbReference type="PDB" id="5JUO">
    <property type="method" value="EM"/>
    <property type="resolution" value="4.00 A"/>
    <property type="chains" value="YA=1-255"/>
</dbReference>
<dbReference type="PDB" id="5JUP">
    <property type="method" value="EM"/>
    <property type="resolution" value="3.50 A"/>
    <property type="chains" value="YA=1-255"/>
</dbReference>
<dbReference type="PDB" id="5JUS">
    <property type="method" value="EM"/>
    <property type="resolution" value="4.20 A"/>
    <property type="chains" value="YA=1-255"/>
</dbReference>
<dbReference type="PDB" id="5JUT">
    <property type="method" value="EM"/>
    <property type="resolution" value="4.00 A"/>
    <property type="chains" value="YA=1-255"/>
</dbReference>
<dbReference type="PDB" id="5JUU">
    <property type="method" value="EM"/>
    <property type="resolution" value="4.00 A"/>
    <property type="chains" value="YA=1-255"/>
</dbReference>
<dbReference type="PDB" id="5LL6">
    <property type="method" value="EM"/>
    <property type="resolution" value="3.90 A"/>
    <property type="chains" value="Q=1-255"/>
</dbReference>
<dbReference type="PDB" id="5LYB">
    <property type="method" value="X-ray"/>
    <property type="resolution" value="3.25 A"/>
    <property type="chains" value="S1/s1=20-235"/>
</dbReference>
<dbReference type="PDB" id="5M1J">
    <property type="method" value="EM"/>
    <property type="resolution" value="3.30 A"/>
    <property type="chains" value="B2=20-233"/>
</dbReference>
<dbReference type="PDB" id="5MC6">
    <property type="method" value="EM"/>
    <property type="resolution" value="3.80 A"/>
    <property type="chains" value="Q=1-255"/>
</dbReference>
<dbReference type="PDB" id="5MEI">
    <property type="method" value="X-ray"/>
    <property type="resolution" value="3.50 A"/>
    <property type="chains" value="C/s1=20-235"/>
</dbReference>
<dbReference type="PDB" id="5NDG">
    <property type="method" value="X-ray"/>
    <property type="resolution" value="3.70 A"/>
    <property type="chains" value="S1/s1=20-235"/>
</dbReference>
<dbReference type="PDB" id="5NDV">
    <property type="method" value="X-ray"/>
    <property type="resolution" value="3.30 A"/>
    <property type="chains" value="S1/s1=20-235"/>
</dbReference>
<dbReference type="PDB" id="5NDW">
    <property type="method" value="X-ray"/>
    <property type="resolution" value="3.70 A"/>
    <property type="chains" value="S1/s1=20-235"/>
</dbReference>
<dbReference type="PDB" id="5OBM">
    <property type="method" value="X-ray"/>
    <property type="resolution" value="3.40 A"/>
    <property type="chains" value="S1/s1=20-235"/>
</dbReference>
<dbReference type="PDB" id="5ON6">
    <property type="method" value="X-ray"/>
    <property type="resolution" value="3.10 A"/>
    <property type="chains" value="C/s1=20-235"/>
</dbReference>
<dbReference type="PDB" id="5TBW">
    <property type="method" value="X-ray"/>
    <property type="resolution" value="3.00 A"/>
    <property type="chains" value="C/s1=20-235"/>
</dbReference>
<dbReference type="PDB" id="5TGA">
    <property type="method" value="X-ray"/>
    <property type="resolution" value="3.30 A"/>
    <property type="chains" value="S1/s1=20-235"/>
</dbReference>
<dbReference type="PDB" id="5TGM">
    <property type="method" value="X-ray"/>
    <property type="resolution" value="3.50 A"/>
    <property type="chains" value="S1/s1=20-235"/>
</dbReference>
<dbReference type="PDB" id="5WYJ">
    <property type="method" value="EM"/>
    <property type="resolution" value="8.70 A"/>
    <property type="chains" value="SC=1-255"/>
</dbReference>
<dbReference type="PDB" id="5WYK">
    <property type="method" value="EM"/>
    <property type="resolution" value="4.50 A"/>
    <property type="chains" value="SC=1-255"/>
</dbReference>
<dbReference type="PDB" id="6EML">
    <property type="method" value="EM"/>
    <property type="resolution" value="3.60 A"/>
    <property type="chains" value="Q=1-255"/>
</dbReference>
<dbReference type="PDB" id="6FAI">
    <property type="method" value="EM"/>
    <property type="resolution" value="3.40 A"/>
    <property type="chains" value="B=1-255"/>
</dbReference>
<dbReference type="PDB" id="6GQ1">
    <property type="method" value="EM"/>
    <property type="resolution" value="4.40 A"/>
    <property type="chains" value="r=20-233"/>
</dbReference>
<dbReference type="PDB" id="6GQB">
    <property type="method" value="EM"/>
    <property type="resolution" value="3.90 A"/>
    <property type="chains" value="r=20-233"/>
</dbReference>
<dbReference type="PDB" id="6GQV">
    <property type="method" value="EM"/>
    <property type="resolution" value="4.00 A"/>
    <property type="chains" value="r=20-233"/>
</dbReference>
<dbReference type="PDB" id="6HHQ">
    <property type="method" value="X-ray"/>
    <property type="resolution" value="3.10 A"/>
    <property type="chains" value="C/s1=1-255"/>
</dbReference>
<dbReference type="PDB" id="6I7O">
    <property type="method" value="EM"/>
    <property type="resolution" value="5.30 A"/>
    <property type="chains" value="Q/Qb=20-235"/>
</dbReference>
<dbReference type="PDB" id="6KE6">
    <property type="method" value="EM"/>
    <property type="resolution" value="3.40 A"/>
    <property type="chains" value="SC=1-255"/>
</dbReference>
<dbReference type="PDB" id="6LQP">
    <property type="method" value="EM"/>
    <property type="resolution" value="3.20 A"/>
    <property type="chains" value="SC=1-255"/>
</dbReference>
<dbReference type="PDB" id="6LQQ">
    <property type="method" value="EM"/>
    <property type="resolution" value="4.10 A"/>
    <property type="chains" value="SC=1-255"/>
</dbReference>
<dbReference type="PDB" id="6LQR">
    <property type="method" value="EM"/>
    <property type="resolution" value="8.60 A"/>
    <property type="chains" value="SC=1-255"/>
</dbReference>
<dbReference type="PDB" id="6LQS">
    <property type="method" value="EM"/>
    <property type="resolution" value="3.80 A"/>
    <property type="chains" value="SC=1-255"/>
</dbReference>
<dbReference type="PDB" id="6LQT">
    <property type="method" value="EM"/>
    <property type="resolution" value="4.90 A"/>
    <property type="chains" value="SC=1-255"/>
</dbReference>
<dbReference type="PDB" id="6Q8Y">
    <property type="method" value="EM"/>
    <property type="resolution" value="3.10 A"/>
    <property type="chains" value="Q=20-233"/>
</dbReference>
<dbReference type="PDB" id="6RBD">
    <property type="method" value="EM"/>
    <property type="resolution" value="3.47 A"/>
    <property type="chains" value="B=1-255"/>
</dbReference>
<dbReference type="PDB" id="6RBE">
    <property type="method" value="EM"/>
    <property type="resolution" value="3.80 A"/>
    <property type="chains" value="B=1-255"/>
</dbReference>
<dbReference type="PDB" id="6S47">
    <property type="method" value="EM"/>
    <property type="resolution" value="3.28 A"/>
    <property type="chains" value="BC=2-255"/>
</dbReference>
<dbReference type="PDB" id="6SNT">
    <property type="method" value="EM"/>
    <property type="resolution" value="2.80 A"/>
    <property type="chains" value="B=1-255"/>
</dbReference>
<dbReference type="PDB" id="6SV4">
    <property type="method" value="EM"/>
    <property type="resolution" value="3.30 A"/>
    <property type="chains" value="Q/Qb/Qc=1-255"/>
</dbReference>
<dbReference type="PDB" id="6T4Q">
    <property type="method" value="EM"/>
    <property type="resolution" value="2.60 A"/>
    <property type="chains" value="SB=2-233"/>
</dbReference>
<dbReference type="PDB" id="6T7I">
    <property type="method" value="EM"/>
    <property type="resolution" value="3.20 A"/>
    <property type="chains" value="SB=1-255"/>
</dbReference>
<dbReference type="PDB" id="6T7T">
    <property type="method" value="EM"/>
    <property type="resolution" value="3.10 A"/>
    <property type="chains" value="SB=2-233"/>
</dbReference>
<dbReference type="PDB" id="6T83">
    <property type="method" value="EM"/>
    <property type="resolution" value="4.00 A"/>
    <property type="chains" value="Ba/c=1-255"/>
</dbReference>
<dbReference type="PDB" id="6TB3">
    <property type="method" value="EM"/>
    <property type="resolution" value="2.80 A"/>
    <property type="chains" value="Q=2-233"/>
</dbReference>
<dbReference type="PDB" id="6TNU">
    <property type="method" value="EM"/>
    <property type="resolution" value="3.10 A"/>
    <property type="chains" value="Q=2-233"/>
</dbReference>
<dbReference type="PDB" id="6Y7C">
    <property type="method" value="EM"/>
    <property type="resolution" value="3.80 A"/>
    <property type="chains" value="B=1-255"/>
</dbReference>
<dbReference type="PDB" id="6Z6J">
    <property type="method" value="EM"/>
    <property type="resolution" value="3.40 A"/>
    <property type="chains" value="SB=1-255"/>
</dbReference>
<dbReference type="PDB" id="6Z6K">
    <property type="method" value="EM"/>
    <property type="resolution" value="3.40 A"/>
    <property type="chains" value="SB=1-255"/>
</dbReference>
<dbReference type="PDB" id="6ZCE">
    <property type="method" value="EM"/>
    <property type="resolution" value="5.30 A"/>
    <property type="chains" value="C=1-255"/>
</dbReference>
<dbReference type="PDB" id="6ZQA">
    <property type="method" value="EM"/>
    <property type="resolution" value="4.40 A"/>
    <property type="chains" value="DA=1-255"/>
</dbReference>
<dbReference type="PDB" id="6ZQB">
    <property type="method" value="EM"/>
    <property type="resolution" value="3.90 A"/>
    <property type="chains" value="DA=1-255"/>
</dbReference>
<dbReference type="PDB" id="6ZQC">
    <property type="method" value="EM"/>
    <property type="resolution" value="3.80 A"/>
    <property type="chains" value="DA=1-255"/>
</dbReference>
<dbReference type="PDB" id="6ZQD">
    <property type="method" value="EM"/>
    <property type="resolution" value="3.80 A"/>
    <property type="chains" value="DA=1-255"/>
</dbReference>
<dbReference type="PDB" id="6ZQE">
    <property type="method" value="EM"/>
    <property type="resolution" value="7.10 A"/>
    <property type="chains" value="DA=1-255"/>
</dbReference>
<dbReference type="PDB" id="6ZQF">
    <property type="method" value="EM"/>
    <property type="resolution" value="4.90 A"/>
    <property type="chains" value="DA=1-255"/>
</dbReference>
<dbReference type="PDB" id="6ZQG">
    <property type="method" value="EM"/>
    <property type="resolution" value="3.50 A"/>
    <property type="chains" value="DA=1-255"/>
</dbReference>
<dbReference type="PDB" id="6ZU9">
    <property type="method" value="EM"/>
    <property type="resolution" value="6.20 A"/>
    <property type="chains" value="Q=1-255"/>
</dbReference>
<dbReference type="PDB" id="6ZVI">
    <property type="method" value="EM"/>
    <property type="resolution" value="3.00 A"/>
    <property type="chains" value="j=20-235"/>
</dbReference>
<dbReference type="PDB" id="7A1G">
    <property type="method" value="EM"/>
    <property type="resolution" value="3.00 A"/>
    <property type="chains" value="Q=2-233"/>
</dbReference>
<dbReference type="PDB" id="7AJT">
    <property type="method" value="EM"/>
    <property type="resolution" value="4.60 A"/>
    <property type="chains" value="DA=1-255"/>
</dbReference>
<dbReference type="PDB" id="7AJU">
    <property type="method" value="EM"/>
    <property type="resolution" value="3.80 A"/>
    <property type="chains" value="DA=1-255"/>
</dbReference>
<dbReference type="PDB" id="7B7D">
    <property type="method" value="EM"/>
    <property type="resolution" value="3.30 A"/>
    <property type="chains" value="Q=2-233"/>
</dbReference>
<dbReference type="PDB" id="7D4I">
    <property type="method" value="EM"/>
    <property type="resolution" value="4.00 A"/>
    <property type="chains" value="SC=1-255"/>
</dbReference>
<dbReference type="PDB" id="7D5T">
    <property type="method" value="EM"/>
    <property type="resolution" value="6.00 A"/>
    <property type="chains" value="SC=1-255"/>
</dbReference>
<dbReference type="PDB" id="7D63">
    <property type="method" value="EM"/>
    <property type="resolution" value="12.30 A"/>
    <property type="chains" value="SC=1-255"/>
</dbReference>
<dbReference type="PDB" id="7MPI">
    <property type="method" value="EM"/>
    <property type="resolution" value="3.05 A"/>
    <property type="chains" value="BB=20-233"/>
</dbReference>
<dbReference type="PDB" id="7MPJ">
    <property type="method" value="EM"/>
    <property type="resolution" value="2.70 A"/>
    <property type="chains" value="BB=20-233"/>
</dbReference>
<dbReference type="PDB" id="7N8B">
    <property type="method" value="EM"/>
    <property type="resolution" value="3.05 A"/>
    <property type="chains" value="BB=20-233"/>
</dbReference>
<dbReference type="PDB" id="7NRC">
    <property type="method" value="EM"/>
    <property type="resolution" value="3.90 A"/>
    <property type="chains" value="SQ=2-233"/>
</dbReference>
<dbReference type="PDB" id="7NRD">
    <property type="method" value="EM"/>
    <property type="resolution" value="4.36 A"/>
    <property type="chains" value="SQ=20-235"/>
</dbReference>
<dbReference type="PDB" id="7WTL">
    <property type="method" value="EM"/>
    <property type="resolution" value="3.30 A"/>
    <property type="chains" value="SB=1-255"/>
</dbReference>
<dbReference type="PDB" id="7WTM">
    <property type="method" value="EM"/>
    <property type="resolution" value="3.50 A"/>
    <property type="chains" value="SB=1-255"/>
</dbReference>
<dbReference type="PDB" id="7WTN">
    <property type="method" value="EM"/>
    <property type="resolution" value="3.40 A"/>
    <property type="chains" value="SB=1-255"/>
</dbReference>
<dbReference type="PDB" id="7WTO">
    <property type="method" value="EM"/>
    <property type="resolution" value="3.50 A"/>
    <property type="chains" value="SB=1-255"/>
</dbReference>
<dbReference type="PDB" id="7WTP">
    <property type="method" value="EM"/>
    <property type="resolution" value="3.80 A"/>
    <property type="chains" value="SB=1-255"/>
</dbReference>
<dbReference type="PDB" id="7WTQ">
    <property type="method" value="EM"/>
    <property type="resolution" value="3.70 A"/>
    <property type="chains" value="SB=1-255"/>
</dbReference>
<dbReference type="PDB" id="7WTR">
    <property type="method" value="EM"/>
    <property type="resolution" value="3.50 A"/>
    <property type="chains" value="SB=1-255"/>
</dbReference>
<dbReference type="PDB" id="7ZPQ">
    <property type="method" value="EM"/>
    <property type="resolution" value="3.47 A"/>
    <property type="chains" value="AB=1-255"/>
</dbReference>
<dbReference type="PDB" id="7ZRS">
    <property type="method" value="EM"/>
    <property type="resolution" value="4.80 A"/>
    <property type="chains" value="AB=1-255"/>
</dbReference>
<dbReference type="PDB" id="7ZUW">
    <property type="method" value="EM"/>
    <property type="resolution" value="4.30 A"/>
    <property type="chains" value="AB=1-255"/>
</dbReference>
<dbReference type="PDB" id="7ZUX">
    <property type="method" value="EM"/>
    <property type="resolution" value="2.50 A"/>
    <property type="chains" value="DB=1-255"/>
</dbReference>
<dbReference type="PDB" id="7ZW0">
    <property type="method" value="EM"/>
    <property type="resolution" value="2.40 A"/>
    <property type="chains" value="sQ=1-255"/>
</dbReference>
<dbReference type="PDB" id="8BN3">
    <property type="method" value="EM"/>
    <property type="resolution" value="2.40 A"/>
    <property type="chains" value="S1=20-233"/>
</dbReference>
<dbReference type="PDB" id="8BQD">
    <property type="method" value="EM"/>
    <property type="resolution" value="3.90 A"/>
    <property type="chains" value="Q=2-233"/>
</dbReference>
<dbReference type="PDB" id="8BQX">
    <property type="method" value="EM"/>
    <property type="resolution" value="3.80 A"/>
    <property type="chains" value="Q=2-233"/>
</dbReference>
<dbReference type="PDB" id="8C00">
    <property type="method" value="EM"/>
    <property type="resolution" value="2.90 A"/>
    <property type="chains" value="Q=1-255"/>
</dbReference>
<dbReference type="PDB" id="8C01">
    <property type="method" value="EM"/>
    <property type="resolution" value="2.70 A"/>
    <property type="chains" value="Q=1-255"/>
</dbReference>
<dbReference type="PDB" id="8CAH">
    <property type="method" value="EM"/>
    <property type="resolution" value="3.00 A"/>
    <property type="chains" value="Q=1-255"/>
</dbReference>
<dbReference type="PDB" id="8CAS">
    <property type="method" value="EM"/>
    <property type="resolution" value="3.30 A"/>
    <property type="chains" value="Q=1-255"/>
</dbReference>
<dbReference type="PDB" id="8CBJ">
    <property type="method" value="EM"/>
    <property type="resolution" value="3.80 A"/>
    <property type="chains" value="B=1-255"/>
</dbReference>
<dbReference type="PDB" id="8CCS">
    <property type="method" value="EM"/>
    <property type="resolution" value="1.97 A"/>
    <property type="chains" value="e=1-255"/>
</dbReference>
<dbReference type="PDB" id="8CDL">
    <property type="method" value="EM"/>
    <property type="resolution" value="2.72 A"/>
    <property type="chains" value="e=1-255"/>
</dbReference>
<dbReference type="PDB" id="8CDR">
    <property type="method" value="EM"/>
    <property type="resolution" value="2.04 A"/>
    <property type="chains" value="e=1-255"/>
</dbReference>
<dbReference type="PDB" id="8CEH">
    <property type="method" value="EM"/>
    <property type="resolution" value="2.05 A"/>
    <property type="chains" value="e=1-255"/>
</dbReference>
<dbReference type="PDB" id="8CF5">
    <property type="method" value="EM"/>
    <property type="resolution" value="2.71 A"/>
    <property type="chains" value="e=1-255"/>
</dbReference>
<dbReference type="PDB" id="8CG8">
    <property type="method" value="EM"/>
    <property type="resolution" value="2.57 A"/>
    <property type="chains" value="e=1-255"/>
</dbReference>
<dbReference type="PDB" id="8CGN">
    <property type="method" value="EM"/>
    <property type="resolution" value="2.28 A"/>
    <property type="chains" value="e=1-255"/>
</dbReference>
<dbReference type="PDB" id="8CIV">
    <property type="method" value="EM"/>
    <property type="resolution" value="2.47 A"/>
    <property type="chains" value="e=1-255"/>
</dbReference>
<dbReference type="PDB" id="8CKU">
    <property type="method" value="EM"/>
    <property type="resolution" value="3.11 A"/>
    <property type="chains" value="e=1-255"/>
</dbReference>
<dbReference type="PDB" id="8CMJ">
    <property type="method" value="EM"/>
    <property type="resolution" value="3.79 A"/>
    <property type="chains" value="e=1-255"/>
</dbReference>
<dbReference type="PDB" id="8K2D">
    <property type="method" value="EM"/>
    <property type="resolution" value="3.20 A"/>
    <property type="chains" value="SB=1-255"/>
</dbReference>
<dbReference type="PDB" id="8K82">
    <property type="method" value="EM"/>
    <property type="resolution" value="3.00 A"/>
    <property type="chains" value="SB=1-255"/>
</dbReference>
<dbReference type="PDB" id="8P4V">
    <property type="method" value="X-ray"/>
    <property type="resolution" value="3.16 A"/>
    <property type="chains" value="C/s1=1-255"/>
</dbReference>
<dbReference type="PDB" id="8P9A">
    <property type="method" value="X-ray"/>
    <property type="resolution" value="2.90 A"/>
    <property type="chains" value="C/s1=1-255"/>
</dbReference>
<dbReference type="PDB" id="8T2X">
    <property type="method" value="EM"/>
    <property type="resolution" value="2.46 A"/>
    <property type="chains" value="BB=1-255"/>
</dbReference>
<dbReference type="PDB" id="8T2Y">
    <property type="method" value="EM"/>
    <property type="resolution" value="2.20 A"/>
    <property type="chains" value="BB=1-255"/>
</dbReference>
<dbReference type="PDB" id="8T2Z">
    <property type="method" value="EM"/>
    <property type="resolution" value="2.40 A"/>
    <property type="chains" value="BB=1-255"/>
</dbReference>
<dbReference type="PDB" id="8T30">
    <property type="method" value="EM"/>
    <property type="resolution" value="2.88 A"/>
    <property type="chains" value="BB=1-255"/>
</dbReference>
<dbReference type="PDB" id="8T3A">
    <property type="method" value="EM"/>
    <property type="resolution" value="2.86 A"/>
    <property type="chains" value="BB=1-255"/>
</dbReference>
<dbReference type="PDB" id="8T3B">
    <property type="method" value="EM"/>
    <property type="resolution" value="3.08 A"/>
    <property type="chains" value="BB=1-255"/>
</dbReference>
<dbReference type="PDB" id="8T3C">
    <property type="method" value="EM"/>
    <property type="resolution" value="3.86 A"/>
    <property type="chains" value="BB=1-255"/>
</dbReference>
<dbReference type="PDB" id="8T3D">
    <property type="method" value="EM"/>
    <property type="resolution" value="2.95 A"/>
    <property type="chains" value="BB=1-255"/>
</dbReference>
<dbReference type="PDB" id="8T3E">
    <property type="method" value="EM"/>
    <property type="resolution" value="3.04 A"/>
    <property type="chains" value="BB=1-255"/>
</dbReference>
<dbReference type="PDB" id="8T3F">
    <property type="method" value="EM"/>
    <property type="resolution" value="3.09 A"/>
    <property type="chains" value="BB=1-255"/>
</dbReference>
<dbReference type="PDB" id="8UT0">
    <property type="method" value="EM"/>
    <property type="resolution" value="3.22 A"/>
    <property type="chains" value="SQ=2-233"/>
</dbReference>
<dbReference type="PDB" id="8UTI">
    <property type="method" value="EM"/>
    <property type="resolution" value="3.13 A"/>
    <property type="chains" value="SQ=2-233"/>
</dbReference>
<dbReference type="PDB" id="8XU8">
    <property type="method" value="EM"/>
    <property type="resolution" value="3.40 A"/>
    <property type="chains" value="SQ=2-233"/>
</dbReference>
<dbReference type="PDB" id="8Y0U">
    <property type="method" value="EM"/>
    <property type="resolution" value="3.59 A"/>
    <property type="chains" value="SB=1-255"/>
</dbReference>
<dbReference type="PDB" id="8YLD">
    <property type="method" value="EM"/>
    <property type="resolution" value="3.90 A"/>
    <property type="chains" value="SQ=2-233"/>
</dbReference>
<dbReference type="PDB" id="8YLR">
    <property type="method" value="EM"/>
    <property type="resolution" value="3.90 A"/>
    <property type="chains" value="SQ=2-233"/>
</dbReference>
<dbReference type="PDB" id="8Z70">
    <property type="method" value="EM"/>
    <property type="resolution" value="3.20 A"/>
    <property type="chains" value="SQ=2-233"/>
</dbReference>
<dbReference type="PDB" id="8Z71">
    <property type="method" value="EM"/>
    <property type="resolution" value="3.60 A"/>
    <property type="chains" value="SQ=2-233"/>
</dbReference>
<dbReference type="PDB" id="9F9S">
    <property type="method" value="EM"/>
    <property type="resolution" value="2.90 A"/>
    <property type="chains" value="Rb/Sb=1-255"/>
</dbReference>
<dbReference type="PDBsum" id="3J6X"/>
<dbReference type="PDBsum" id="3J6Y"/>
<dbReference type="PDBsum" id="3J77"/>
<dbReference type="PDBsum" id="3J78"/>
<dbReference type="PDBsum" id="4U3M"/>
<dbReference type="PDBsum" id="4U3N"/>
<dbReference type="PDBsum" id="4U3U"/>
<dbReference type="PDBsum" id="4U4N"/>
<dbReference type="PDBsum" id="4U4O"/>
<dbReference type="PDBsum" id="4U4Q"/>
<dbReference type="PDBsum" id="4U4R"/>
<dbReference type="PDBsum" id="4U4U"/>
<dbReference type="PDBsum" id="4U4Y"/>
<dbReference type="PDBsum" id="4U4Z"/>
<dbReference type="PDBsum" id="4U50"/>
<dbReference type="PDBsum" id="4U51"/>
<dbReference type="PDBsum" id="4U52"/>
<dbReference type="PDBsum" id="4U53"/>
<dbReference type="PDBsum" id="4U55"/>
<dbReference type="PDBsum" id="4U56"/>
<dbReference type="PDBsum" id="4U6F"/>
<dbReference type="PDBsum" id="4V88"/>
<dbReference type="PDBsum" id="4V8Y"/>
<dbReference type="PDBsum" id="4V8Z"/>
<dbReference type="PDBsum" id="4V92"/>
<dbReference type="PDBsum" id="5DAT"/>
<dbReference type="PDBsum" id="5DC3"/>
<dbReference type="PDBsum" id="5DGE"/>
<dbReference type="PDBsum" id="5DGF"/>
<dbReference type="PDBsum" id="5DGV"/>
<dbReference type="PDBsum" id="5FCI"/>
<dbReference type="PDBsum" id="5FCJ"/>
<dbReference type="PDBsum" id="5I4L"/>
<dbReference type="PDBsum" id="5JUO"/>
<dbReference type="PDBsum" id="5JUP"/>
<dbReference type="PDBsum" id="5JUS"/>
<dbReference type="PDBsum" id="5JUT"/>
<dbReference type="PDBsum" id="5JUU"/>
<dbReference type="PDBsum" id="5LL6"/>
<dbReference type="PDBsum" id="5LYB"/>
<dbReference type="PDBsum" id="5M1J"/>
<dbReference type="PDBsum" id="5MC6"/>
<dbReference type="PDBsum" id="5MEI"/>
<dbReference type="PDBsum" id="5NDG"/>
<dbReference type="PDBsum" id="5NDV"/>
<dbReference type="PDBsum" id="5NDW"/>
<dbReference type="PDBsum" id="5OBM"/>
<dbReference type="PDBsum" id="5ON6"/>
<dbReference type="PDBsum" id="5TBW"/>
<dbReference type="PDBsum" id="5TGA"/>
<dbReference type="PDBsum" id="5TGM"/>
<dbReference type="PDBsum" id="5WYJ"/>
<dbReference type="PDBsum" id="5WYK"/>
<dbReference type="PDBsum" id="6EML"/>
<dbReference type="PDBsum" id="6FAI"/>
<dbReference type="PDBsum" id="6GQ1"/>
<dbReference type="PDBsum" id="6GQB"/>
<dbReference type="PDBsum" id="6GQV"/>
<dbReference type="PDBsum" id="6HHQ"/>
<dbReference type="PDBsum" id="6I7O"/>
<dbReference type="PDBsum" id="6KE6"/>
<dbReference type="PDBsum" id="6LQP"/>
<dbReference type="PDBsum" id="6LQQ"/>
<dbReference type="PDBsum" id="6LQR"/>
<dbReference type="PDBsum" id="6LQS"/>
<dbReference type="PDBsum" id="6LQT"/>
<dbReference type="PDBsum" id="6Q8Y"/>
<dbReference type="PDBsum" id="6RBD"/>
<dbReference type="PDBsum" id="6RBE"/>
<dbReference type="PDBsum" id="6S47"/>
<dbReference type="PDBsum" id="6SNT"/>
<dbReference type="PDBsum" id="6SV4"/>
<dbReference type="PDBsum" id="6T4Q"/>
<dbReference type="PDBsum" id="6T7I"/>
<dbReference type="PDBsum" id="6T7T"/>
<dbReference type="PDBsum" id="6T83"/>
<dbReference type="PDBsum" id="6TB3"/>
<dbReference type="PDBsum" id="6TNU"/>
<dbReference type="PDBsum" id="6Y7C"/>
<dbReference type="PDBsum" id="6Z6J"/>
<dbReference type="PDBsum" id="6Z6K"/>
<dbReference type="PDBsum" id="6ZCE"/>
<dbReference type="PDBsum" id="6ZQA"/>
<dbReference type="PDBsum" id="6ZQB"/>
<dbReference type="PDBsum" id="6ZQC"/>
<dbReference type="PDBsum" id="6ZQD"/>
<dbReference type="PDBsum" id="6ZQE"/>
<dbReference type="PDBsum" id="6ZQF"/>
<dbReference type="PDBsum" id="6ZQG"/>
<dbReference type="PDBsum" id="6ZU9"/>
<dbReference type="PDBsum" id="6ZVI"/>
<dbReference type="PDBsum" id="7A1G"/>
<dbReference type="PDBsum" id="7AJT"/>
<dbReference type="PDBsum" id="7AJU"/>
<dbReference type="PDBsum" id="7B7D"/>
<dbReference type="PDBsum" id="7D4I"/>
<dbReference type="PDBsum" id="7D5T"/>
<dbReference type="PDBsum" id="7D63"/>
<dbReference type="PDBsum" id="7MPI"/>
<dbReference type="PDBsum" id="7MPJ"/>
<dbReference type="PDBsum" id="7N8B"/>
<dbReference type="PDBsum" id="7NRC"/>
<dbReference type="PDBsum" id="7NRD"/>
<dbReference type="PDBsum" id="7WTL"/>
<dbReference type="PDBsum" id="7WTM"/>
<dbReference type="PDBsum" id="7WTN"/>
<dbReference type="PDBsum" id="7WTO"/>
<dbReference type="PDBsum" id="7WTP"/>
<dbReference type="PDBsum" id="7WTQ"/>
<dbReference type="PDBsum" id="7WTR"/>
<dbReference type="PDBsum" id="7ZPQ"/>
<dbReference type="PDBsum" id="7ZRS"/>
<dbReference type="PDBsum" id="7ZUW"/>
<dbReference type="PDBsum" id="7ZUX"/>
<dbReference type="PDBsum" id="7ZW0"/>
<dbReference type="PDBsum" id="8BN3"/>
<dbReference type="PDBsum" id="8BQD"/>
<dbReference type="PDBsum" id="8BQX"/>
<dbReference type="PDBsum" id="8C00"/>
<dbReference type="PDBsum" id="8C01"/>
<dbReference type="PDBsum" id="8CAH"/>
<dbReference type="PDBsum" id="8CAS"/>
<dbReference type="PDBsum" id="8CBJ"/>
<dbReference type="PDBsum" id="8CCS"/>
<dbReference type="PDBsum" id="8CDL"/>
<dbReference type="PDBsum" id="8CDR"/>
<dbReference type="PDBsum" id="8CEH"/>
<dbReference type="PDBsum" id="8CF5"/>
<dbReference type="PDBsum" id="8CG8"/>
<dbReference type="PDBsum" id="8CGN"/>
<dbReference type="PDBsum" id="8CIV"/>
<dbReference type="PDBsum" id="8CKU"/>
<dbReference type="PDBsum" id="8CMJ"/>
<dbReference type="PDBsum" id="8K2D"/>
<dbReference type="PDBsum" id="8K82"/>
<dbReference type="PDBsum" id="8P4V"/>
<dbReference type="PDBsum" id="8P9A"/>
<dbReference type="PDBsum" id="8T2X"/>
<dbReference type="PDBsum" id="8T2Y"/>
<dbReference type="PDBsum" id="8T2Z"/>
<dbReference type="PDBsum" id="8T30"/>
<dbReference type="PDBsum" id="8T3A"/>
<dbReference type="PDBsum" id="8T3B"/>
<dbReference type="PDBsum" id="8T3C"/>
<dbReference type="PDBsum" id="8T3D"/>
<dbReference type="PDBsum" id="8T3E"/>
<dbReference type="PDBsum" id="8T3F"/>
<dbReference type="PDBsum" id="8UT0"/>
<dbReference type="PDBsum" id="8UTI"/>
<dbReference type="PDBsum" id="8XU8"/>
<dbReference type="PDBsum" id="8Y0U"/>
<dbReference type="PDBsum" id="8YLD"/>
<dbReference type="PDBsum" id="8YLR"/>
<dbReference type="PDBsum" id="8Z70"/>
<dbReference type="PDBsum" id="8Z71"/>
<dbReference type="PDBsum" id="9F9S"/>
<dbReference type="EMDB" id="EMD-0047"/>
<dbReference type="EMDB" id="EMD-0048"/>
<dbReference type="EMDB" id="EMD-0049"/>
<dbReference type="EMDB" id="EMD-0949"/>
<dbReference type="EMDB" id="EMD-0950"/>
<dbReference type="EMDB" id="EMD-0951"/>
<dbReference type="EMDB" id="EMD-0952"/>
<dbReference type="EMDB" id="EMD-0953"/>
<dbReference type="EMDB" id="EMD-10098"/>
<dbReference type="EMDB" id="EMD-10262"/>
<dbReference type="EMDB" id="EMD-10315"/>
<dbReference type="EMDB" id="EMD-10377"/>
<dbReference type="EMDB" id="EMD-10396"/>
<dbReference type="EMDB" id="EMD-10398"/>
<dbReference type="EMDB" id="EMD-10431"/>
<dbReference type="EMDB" id="EMD-10713"/>
<dbReference type="EMDB" id="EMD-11096"/>
<dbReference type="EMDB" id="EMD-11097"/>
<dbReference type="EMDB" id="EMD-11160"/>
<dbReference type="EMDB" id="EMD-11357"/>
<dbReference type="EMDB" id="EMD-11358"/>
<dbReference type="EMDB" id="EMD-11359"/>
<dbReference type="EMDB" id="EMD-11360"/>
<dbReference type="EMDB" id="EMD-11361"/>
<dbReference type="EMDB" id="EMD-11362"/>
<dbReference type="EMDB" id="EMD-11363"/>
<dbReference type="EMDB" id="EMD-11439"/>
<dbReference type="EMDB" id="EMD-11608"/>
<dbReference type="EMDB" id="EMD-11807"/>
<dbReference type="EMDB" id="EMD-11808"/>
<dbReference type="EMDB" id="EMD-12081"/>
<dbReference type="EMDB" id="EMD-12534"/>
<dbReference type="EMDB" id="EMD-12535"/>
<dbReference type="EMDB" id="EMD-14921"/>
<dbReference type="EMDB" id="EMD-14978"/>
<dbReference type="EMDB" id="EMD-14990"/>
<dbReference type="EMDB" id="EMD-16191"/>
<dbReference type="EMDB" id="EMD-16347"/>
<dbReference type="EMDB" id="EMD-16349"/>
<dbReference type="EMDB" id="EMD-16525"/>
<dbReference type="EMDB" id="EMD-16533"/>
<dbReference type="EMDB" id="EMD-16541"/>
<dbReference type="EMDB" id="EMD-16609"/>
<dbReference type="EMDB" id="EMD-16616"/>
<dbReference type="EMDB" id="EMD-16634"/>
<dbReference type="EMDB" id="EMD-16648"/>
<dbReference type="EMDB" id="EMD-16684"/>
<dbReference type="EMDB" id="EMD-16702"/>
<dbReference type="EMDB" id="EMD-16729"/>
<dbReference type="EMDB" id="EMD-23934"/>
<dbReference type="EMDB" id="EMD-23935"/>
<dbReference type="EMDB" id="EMD-24235"/>
<dbReference type="EMDB" id="EMD-30574"/>
<dbReference type="EMDB" id="EMD-30585"/>
<dbReference type="EMDB" id="EMD-30588"/>
<dbReference type="EMDB" id="EMD-32790"/>
<dbReference type="EMDB" id="EMD-32792"/>
<dbReference type="EMDB" id="EMD-32793"/>
<dbReference type="EMDB" id="EMD-32795"/>
<dbReference type="EMDB" id="EMD-32796"/>
<dbReference type="EMDB" id="EMD-3461"/>
<dbReference type="EMDB" id="EMD-36839"/>
<dbReference type="EMDB" id="EMD-36945"/>
<dbReference type="EMDB" id="EMD-38660"/>
<dbReference type="EMDB" id="EMD-4140"/>
<dbReference type="EMDB" id="EMD-4214"/>
<dbReference type="EMDB" id="EMD-4427"/>
<dbReference type="EMDB" id="EMD-4474"/>
<dbReference type="EMDB" id="EMD-4792"/>
<dbReference type="EMDB" id="EMD-4793"/>
<dbReference type="EMDB" id="EMD-50259"/>
<dbReference type="EMDB" id="EMD-6695"/>
<dbReference type="EMDB" id="EMD-6696"/>
<dbReference type="EMDB" id="EMD-9964"/>
<dbReference type="SMR" id="P33442"/>
<dbReference type="BioGRID" id="31700">
    <property type="interactions" value="777"/>
</dbReference>
<dbReference type="ComplexPortal" id="CPX-1599">
    <property type="entry name" value="40S cytosolic small ribosomal subunit"/>
</dbReference>
<dbReference type="DIP" id="DIP-4147N"/>
<dbReference type="FunCoup" id="P33442">
    <property type="interactions" value="1554"/>
</dbReference>
<dbReference type="IntAct" id="P33442">
    <property type="interactions" value="131"/>
</dbReference>
<dbReference type="MINT" id="P33442"/>
<dbReference type="STRING" id="4932.YLR441C"/>
<dbReference type="CarbonylDB" id="P33442"/>
<dbReference type="iPTMnet" id="P33442"/>
<dbReference type="PaxDb" id="4932-YLR441C"/>
<dbReference type="PeptideAtlas" id="P33442"/>
<dbReference type="TopDownProteomics" id="P33442"/>
<dbReference type="EnsemblFungi" id="YLR441C_mRNA">
    <property type="protein sequence ID" value="YLR441C"/>
    <property type="gene ID" value="YLR441C"/>
</dbReference>
<dbReference type="GeneID" id="851162"/>
<dbReference type="KEGG" id="sce:YLR441C"/>
<dbReference type="AGR" id="SGD:S000004433"/>
<dbReference type="SGD" id="S000004433">
    <property type="gene designation" value="RPS1A"/>
</dbReference>
<dbReference type="VEuPathDB" id="FungiDB:YLR441C"/>
<dbReference type="eggNOG" id="KOG1628">
    <property type="taxonomic scope" value="Eukaryota"/>
</dbReference>
<dbReference type="GeneTree" id="ENSGT00940000165721"/>
<dbReference type="HOGENOM" id="CLU_062507_0_0_1"/>
<dbReference type="InParanoid" id="P33442"/>
<dbReference type="OMA" id="MCEIITR"/>
<dbReference type="OrthoDB" id="9834376at2759"/>
<dbReference type="BioCyc" id="YEAST:G3O-32497-MONOMER"/>
<dbReference type="Reactome" id="R-SCE-5689880">
    <property type="pathway name" value="Ub-specific processing proteases"/>
</dbReference>
<dbReference type="Reactome" id="R-SCE-936440">
    <property type="pathway name" value="Negative regulators of DDX58/IFIH1 signaling"/>
</dbReference>
<dbReference type="BioGRID-ORCS" id="851162">
    <property type="hits" value="1 hit in 10 CRISPR screens"/>
</dbReference>
<dbReference type="PRO" id="PR:P33442"/>
<dbReference type="Proteomes" id="UP000002311">
    <property type="component" value="Chromosome XII"/>
</dbReference>
<dbReference type="RNAct" id="P33442">
    <property type="molecule type" value="protein"/>
</dbReference>
<dbReference type="GO" id="GO:0030686">
    <property type="term" value="C:90S preribosome"/>
    <property type="evidence" value="ECO:0007005"/>
    <property type="project" value="SGD"/>
</dbReference>
<dbReference type="GO" id="GO:0005829">
    <property type="term" value="C:cytosol"/>
    <property type="evidence" value="ECO:0000318"/>
    <property type="project" value="GO_Central"/>
</dbReference>
<dbReference type="GO" id="GO:0022627">
    <property type="term" value="C:cytosolic small ribosomal subunit"/>
    <property type="evidence" value="ECO:0000303"/>
    <property type="project" value="SGD"/>
</dbReference>
<dbReference type="GO" id="GO:0003735">
    <property type="term" value="F:structural constituent of ribosome"/>
    <property type="evidence" value="ECO:0000303"/>
    <property type="project" value="SGD"/>
</dbReference>
<dbReference type="GO" id="GO:0002181">
    <property type="term" value="P:cytoplasmic translation"/>
    <property type="evidence" value="ECO:0000303"/>
    <property type="project" value="SGD"/>
</dbReference>
<dbReference type="GO" id="GO:0000462">
    <property type="term" value="P:maturation of SSU-rRNA from tricistronic rRNA transcript (SSU-rRNA, 5.8S rRNA, LSU-rRNA)"/>
    <property type="evidence" value="ECO:0000316"/>
    <property type="project" value="SGD"/>
</dbReference>
<dbReference type="HAMAP" id="MF_03122">
    <property type="entry name" value="Ribosomal_eS1_euk"/>
    <property type="match status" value="1"/>
</dbReference>
<dbReference type="InterPro" id="IPR001593">
    <property type="entry name" value="Ribosomal_eS1"/>
</dbReference>
<dbReference type="InterPro" id="IPR018281">
    <property type="entry name" value="Ribosomal_eS1_CS"/>
</dbReference>
<dbReference type="InterPro" id="IPR027500">
    <property type="entry name" value="Ribosomal_eS1_euk"/>
</dbReference>
<dbReference type="PANTHER" id="PTHR11830">
    <property type="entry name" value="40S RIBOSOMAL PROTEIN S3A"/>
    <property type="match status" value="1"/>
</dbReference>
<dbReference type="Pfam" id="PF01015">
    <property type="entry name" value="Ribosomal_S3Ae"/>
    <property type="match status" value="1"/>
</dbReference>
<dbReference type="SMART" id="SM01397">
    <property type="entry name" value="Ribosomal_S3Ae"/>
    <property type="match status" value="1"/>
</dbReference>
<dbReference type="PROSITE" id="PS01191">
    <property type="entry name" value="RIBOSOMAL_S3AE"/>
    <property type="match status" value="1"/>
</dbReference>
<sequence length="255" mass="28743">MAVGKNKRLSKGKKGQKKRVVDPFTRKEWFDIKAPSTFENRNVGKTLVNKSTGLKSASDALKGRVVEVCLADLQGSEDHSFRKIKLRVDEVQGKNLLTNFHGMDFTTDKLRSMVRKWQTLIEANVTVKTSDDYVLRIFAIAFTRKQANQVKRHSYAQSSHIRAIRKVISEILTKEVQGSTLAQLTSKLIPEVINKEIENATKDIFPLQNIHVRKVKLLKQPKFDVGALMALHGEGSGEEKGKKVTGFKDEVLETV</sequence>
<gene>
    <name evidence="2 9" type="primary">RPS1A</name>
    <name type="synonym">PLC1</name>
    <name type="synonym">RPS10A</name>
    <name type="ordered locus">YLR441C</name>
    <name type="ORF">L9753.9</name>
</gene>
<reference key="1">
    <citation type="journal article" date="1992" name="FEBS Lett.">
        <title>A gene family homologous to the S-phase specific gene in higher plants is essential for cell proliferation in Saccharomyces cerevisiae.</title>
        <authorList>
            <person name="Ito M."/>
            <person name="Yasui A."/>
            <person name="Komamine A."/>
        </authorList>
    </citation>
    <scope>NUCLEOTIDE SEQUENCE [GENOMIC DNA]</scope>
</reference>
<reference key="2">
    <citation type="journal article" date="1994" name="Eur. J. Biochem.">
        <title>Analysis of genes encoding highly conserved lysine-rich proteins in Aplysia californica and Saccharomyces cerevisiae.</title>
        <authorList>
            <person name="Auclair D."/>
            <person name="Lang B.L."/>
            <person name="Desgroseillers L."/>
            <person name="Forest P."/>
        </authorList>
    </citation>
    <scope>NUCLEOTIDE SEQUENCE [GENOMIC DNA]</scope>
</reference>
<reference key="3">
    <citation type="journal article" date="1997" name="Nature">
        <title>The nucleotide sequence of Saccharomyces cerevisiae chromosome XII.</title>
        <authorList>
            <person name="Johnston M."/>
            <person name="Hillier L.W."/>
            <person name="Riles L."/>
            <person name="Albermann K."/>
            <person name="Andre B."/>
            <person name="Ansorge W."/>
            <person name="Benes V."/>
            <person name="Brueckner M."/>
            <person name="Delius H."/>
            <person name="Dubois E."/>
            <person name="Duesterhoeft A."/>
            <person name="Entian K.-D."/>
            <person name="Floeth M."/>
            <person name="Goffeau A."/>
            <person name="Hebling U."/>
            <person name="Heumann K."/>
            <person name="Heuss-Neitzel D."/>
            <person name="Hilbert H."/>
            <person name="Hilger F."/>
            <person name="Kleine K."/>
            <person name="Koetter P."/>
            <person name="Louis E.J."/>
            <person name="Messenguy F."/>
            <person name="Mewes H.-W."/>
            <person name="Miosga T."/>
            <person name="Moestl D."/>
            <person name="Mueller-Auer S."/>
            <person name="Nentwich U."/>
            <person name="Obermaier B."/>
            <person name="Piravandi E."/>
            <person name="Pohl T.M."/>
            <person name="Portetelle D."/>
            <person name="Purnelle B."/>
            <person name="Rechmann S."/>
            <person name="Rieger M."/>
            <person name="Rinke M."/>
            <person name="Rose M."/>
            <person name="Scharfe M."/>
            <person name="Scherens B."/>
            <person name="Scholler P."/>
            <person name="Schwager C."/>
            <person name="Schwarz S."/>
            <person name="Underwood A.P."/>
            <person name="Urrestarazu L.A."/>
            <person name="Vandenbol M."/>
            <person name="Verhasselt P."/>
            <person name="Vierendeels F."/>
            <person name="Voet M."/>
            <person name="Volckaert G."/>
            <person name="Voss H."/>
            <person name="Wambutt R."/>
            <person name="Wedler E."/>
            <person name="Wedler H."/>
            <person name="Zimmermann F.K."/>
            <person name="Zollner A."/>
            <person name="Hani J."/>
            <person name="Hoheisel J.D."/>
        </authorList>
    </citation>
    <scope>NUCLEOTIDE SEQUENCE [LARGE SCALE GENOMIC DNA]</scope>
    <source>
        <strain>ATCC 204508 / S288c</strain>
    </source>
</reference>
<reference key="4">
    <citation type="journal article" date="2014" name="G3 (Bethesda)">
        <title>The reference genome sequence of Saccharomyces cerevisiae: Then and now.</title>
        <authorList>
            <person name="Engel S.R."/>
            <person name="Dietrich F.S."/>
            <person name="Fisk D.G."/>
            <person name="Binkley G."/>
            <person name="Balakrishnan R."/>
            <person name="Costanzo M.C."/>
            <person name="Dwight S.S."/>
            <person name="Hitz B.C."/>
            <person name="Karra K."/>
            <person name="Nash R.S."/>
            <person name="Weng S."/>
            <person name="Wong E.D."/>
            <person name="Lloyd P."/>
            <person name="Skrzypek M.S."/>
            <person name="Miyasato S.R."/>
            <person name="Simison M."/>
            <person name="Cherry J.M."/>
        </authorList>
    </citation>
    <scope>GENOME REANNOTATION</scope>
    <source>
        <strain>ATCC 204508 / S288c</strain>
    </source>
</reference>
<reference key="5">
    <citation type="journal article" date="2007" name="Genome Res.">
        <title>Approaching a complete repository of sequence-verified protein-encoding clones for Saccharomyces cerevisiae.</title>
        <authorList>
            <person name="Hu Y."/>
            <person name="Rolfs A."/>
            <person name="Bhullar B."/>
            <person name="Murthy T.V.S."/>
            <person name="Zhu C."/>
            <person name="Berger M.F."/>
            <person name="Camargo A.A."/>
            <person name="Kelley F."/>
            <person name="McCarron S."/>
            <person name="Jepson D."/>
            <person name="Richardson A."/>
            <person name="Raphael J."/>
            <person name="Moreira D."/>
            <person name="Taycher E."/>
            <person name="Zuo D."/>
            <person name="Mohr S."/>
            <person name="Kane M.F."/>
            <person name="Williamson J."/>
            <person name="Simpson A.J.G."/>
            <person name="Bulyk M.L."/>
            <person name="Harlow E."/>
            <person name="Marsischky G."/>
            <person name="Kolodner R.D."/>
            <person name="LaBaer J."/>
        </authorList>
    </citation>
    <scope>NUCLEOTIDE SEQUENCE [GENOMIC DNA]</scope>
    <source>
        <strain>ATCC 204508 / S288c</strain>
    </source>
</reference>
<reference key="6">
    <citation type="journal article" date="1984" name="EMBO J.">
        <title>Characterization of two genes required for the position-effect control of yeast mating-type genes.</title>
        <authorList>
            <person name="Shore D."/>
            <person name="Squire M."/>
            <person name="Nasmyth K.A."/>
        </authorList>
    </citation>
    <scope>NUCLEOTIDE SEQUENCE [GENOMIC DNA] OF 1-177</scope>
</reference>
<reference key="7">
    <citation type="journal article" date="1998" name="Yeast">
        <title>The list of cytoplasmic ribosomal proteins of Saccharomyces cerevisiae.</title>
        <authorList>
            <person name="Planta R.J."/>
            <person name="Mager W.H."/>
        </authorList>
    </citation>
    <scope>NOMENCLATURE</scope>
    <scope>SUBUNIT</scope>
</reference>
<reference key="8">
    <citation type="journal article" date="1999" name="J. Biol. Chem.">
        <title>The action of N-terminal acetyltransferases on yeast ribosomal proteins.</title>
        <authorList>
            <person name="Arnold R.J."/>
            <person name="Polevoda B."/>
            <person name="Reilly J.P."/>
            <person name="Sherman F."/>
        </authorList>
    </citation>
    <scope>CLEAVAGE OF INITIATOR METHIONINE</scope>
    <scope>ACETYLATION AT ALA-2 BY NATA</scope>
</reference>
<reference key="9">
    <citation type="journal article" date="2003" name="Nature">
        <title>Global analysis of protein localization in budding yeast.</title>
        <authorList>
            <person name="Huh W.-K."/>
            <person name="Falvo J.V."/>
            <person name="Gerke L.C."/>
            <person name="Carroll A.S."/>
            <person name="Howson R.W."/>
            <person name="Weissman J.S."/>
            <person name="O'Shea E.K."/>
        </authorList>
    </citation>
    <scope>SUBCELLULAR LOCATION [LARGE SCALE ANALYSIS]</scope>
</reference>
<reference key="10">
    <citation type="journal article" date="2003" name="Nature">
        <title>Global analysis of protein expression in yeast.</title>
        <authorList>
            <person name="Ghaemmaghami S."/>
            <person name="Huh W.-K."/>
            <person name="Bower K."/>
            <person name="Howson R.W."/>
            <person name="Belle A."/>
            <person name="Dephoure N."/>
            <person name="O'Shea E.K."/>
            <person name="Weissman J.S."/>
        </authorList>
    </citation>
    <scope>LEVEL OF PROTEIN EXPRESSION [LARGE SCALE ANALYSIS]</scope>
</reference>
<reference key="11">
    <citation type="journal article" date="2007" name="J. Proteome Res.">
        <title>Large-scale phosphorylation analysis of alpha-factor-arrested Saccharomyces cerevisiae.</title>
        <authorList>
            <person name="Li X."/>
            <person name="Gerber S.A."/>
            <person name="Rudner A.D."/>
            <person name="Beausoleil S.A."/>
            <person name="Haas W."/>
            <person name="Villen J."/>
            <person name="Elias J.E."/>
            <person name="Gygi S.P."/>
        </authorList>
    </citation>
    <scope>PHOSPHORYLATION [LARGE SCALE ANALYSIS] AT THR-245</scope>
    <scope>IDENTIFICATION BY MASS SPECTROMETRY [LARGE SCALE ANALYSIS]</scope>
    <source>
        <strain>ADR376</strain>
    </source>
</reference>
<reference key="12">
    <citation type="journal article" date="2008" name="Mol. Cell. Proteomics">
        <title>A multidimensional chromatography technology for in-depth phosphoproteome analysis.</title>
        <authorList>
            <person name="Albuquerque C.P."/>
            <person name="Smolka M.B."/>
            <person name="Payne S.H."/>
            <person name="Bafna V."/>
            <person name="Eng J."/>
            <person name="Zhou H."/>
        </authorList>
    </citation>
    <scope>PHOSPHORYLATION [LARGE SCALE ANALYSIS] AT THR-254</scope>
    <scope>IDENTIFICATION BY MASS SPECTROMETRY [LARGE SCALE ANALYSIS]</scope>
</reference>
<reference key="13">
    <citation type="journal article" date="2009" name="Science">
        <title>Global analysis of Cdk1 substrate phosphorylation sites provides insights into evolution.</title>
        <authorList>
            <person name="Holt L.J."/>
            <person name="Tuch B.B."/>
            <person name="Villen J."/>
            <person name="Johnson A.D."/>
            <person name="Gygi S.P."/>
            <person name="Morgan D.O."/>
        </authorList>
    </citation>
    <scope>PHOSPHORYLATION [LARGE SCALE ANALYSIS] AT THR-245 AND THR-254</scope>
    <scope>IDENTIFICATION BY MASS SPECTROMETRY [LARGE SCALE ANALYSIS]</scope>
</reference>
<reference key="14">
    <citation type="journal article" date="2014" name="Curr. Opin. Struct. Biol.">
        <title>A new system for naming ribosomal proteins.</title>
        <authorList>
            <person name="Ban N."/>
            <person name="Beckmann R."/>
            <person name="Cate J.H.D."/>
            <person name="Dinman J.D."/>
            <person name="Dragon F."/>
            <person name="Ellis S.R."/>
            <person name="Lafontaine D.L.J."/>
            <person name="Lindahl L."/>
            <person name="Liljas A."/>
            <person name="Lipton J.M."/>
            <person name="McAlear M.A."/>
            <person name="Moore P.B."/>
            <person name="Noller H.F."/>
            <person name="Ortega J."/>
            <person name="Panse V.G."/>
            <person name="Ramakrishnan V."/>
            <person name="Spahn C.M.T."/>
            <person name="Steitz T.A."/>
            <person name="Tchorzewski M."/>
            <person name="Tollervey D."/>
            <person name="Warren A.J."/>
            <person name="Williamson J.R."/>
            <person name="Wilson D."/>
            <person name="Yonath A."/>
            <person name="Yusupov M."/>
        </authorList>
    </citation>
    <scope>NOMENCLATURE</scope>
</reference>
<reference key="15">
    <citation type="journal article" date="2011" name="Science">
        <title>The structure of the eukaryotic ribosome at 3.0 A resolution.</title>
        <authorList>
            <person name="Ben-Shem A."/>
            <person name="Garreau de Loubresse N."/>
            <person name="Melnikov S."/>
            <person name="Jenner L."/>
            <person name="Yusupova G."/>
            <person name="Yusupov M."/>
        </authorList>
    </citation>
    <scope>X-RAY CRYSTALLOGRAPHY (3.00 ANGSTROMS) OF 80S RIBOSOME</scope>
    <scope>SUBUNIT</scope>
    <scope>SUBCELLULAR LOCATION</scope>
</reference>
<accession>P33442</accession>
<accession>D6VZ76</accession>
<comment type="function">
    <text evidence="11">Component of the ribosome, a large ribonucleoprotein complex responsible for the synthesis of proteins in the cell. The small ribosomal subunit (SSU) binds messenger RNAs (mRNAs) and translates the encoded message by selecting cognate aminoacyl-transfer RNA (tRNA) molecules. The large subunit (LSU) contains the ribosomal catalytic site termed the peptidyl transferase center (PTC), which catalyzes the formation of peptide bonds, thereby polymerizing the amino acids delivered by tRNAs into a polypeptide chain. The nascent polypeptides leave the ribosome through a tunnel in the LSU and interact with protein factors that function in enzymatic processing, targeting, and the membrane insertion of nascent chains at the exit of the ribosomal tunnel.</text>
</comment>
<comment type="subunit">
    <text evidence="7 12">Component of the small ribosomal subunit (SSU). Mature yeast ribosomes consist of a small (40S) and a large (60S) subunit. The 40S small subunit contains 1 molecule of ribosomal RNA (18S rRNA) and 33 different proteins (encoded by 57 genes). The large 60S subunit contains 3 rRNA molecules (25S, 5.8S and 5S rRNA) and 46 different proteins (encoded by 81 genes). eS1 interacts directly with uS11 and eS26, which form part of the mRNA exit tunnel (PubMed:22096102, PubMed:9559554).</text>
</comment>
<comment type="subcellular location">
    <subcellularLocation>
        <location evidence="2 5 7">Cytoplasm</location>
    </subcellularLocation>
</comment>
<comment type="PTM">
    <text evidence="4">N-terminally acetylated by acetyltransferase NatA.</text>
</comment>
<comment type="miscellaneous">
    <text evidence="6">Present with 92400 molecules/cell in log phase SD medium.</text>
</comment>
<comment type="miscellaneous">
    <text evidence="10">There are 2 genes for eS1 in yeast.</text>
</comment>
<comment type="similarity">
    <text evidence="2">Belongs to the eukaryotic ribosomal protein eS1 family.</text>
</comment>
<proteinExistence type="evidence at protein level"/>
<feature type="initiator methionine" description="Removed" evidence="2 4">
    <location>
        <position position="1"/>
    </location>
</feature>
<feature type="chain" id="PRO_0000153541" description="Small ribosomal subunit protein eS1A">
    <location>
        <begin position="2"/>
        <end position="255"/>
    </location>
</feature>
<feature type="region of interest" description="Disordered" evidence="3">
    <location>
        <begin position="1"/>
        <end position="20"/>
    </location>
</feature>
<feature type="compositionally biased region" description="Basic residues" evidence="3">
    <location>
        <begin position="1"/>
        <end position="18"/>
    </location>
</feature>
<feature type="modified residue" description="N-acetylalanine; partial" evidence="2 4">
    <location>
        <position position="2"/>
    </location>
</feature>
<feature type="modified residue" description="Phosphothreonine" evidence="13 15">
    <location>
        <position position="245"/>
    </location>
</feature>
<feature type="modified residue" description="Phosphothreonine" evidence="14 15">
    <location>
        <position position="254"/>
    </location>
</feature>
<feature type="cross-link" description="Glycyl lysine isopeptide (Lys-Gly) (interchain with G-Cter in ubiquitin)" evidence="1">
    <location>
        <position position="248"/>
    </location>
</feature>
<feature type="helix" evidence="18">
    <location>
        <begin position="23"/>
        <end position="26"/>
    </location>
</feature>
<feature type="strand" evidence="18">
    <location>
        <begin position="27"/>
        <end position="33"/>
    </location>
</feature>
<feature type="strand" evidence="17">
    <location>
        <begin position="36"/>
        <end position="39"/>
    </location>
</feature>
<feature type="strand" evidence="18">
    <location>
        <begin position="42"/>
        <end position="49"/>
    </location>
</feature>
<feature type="strand" evidence="18">
    <location>
        <begin position="53"/>
        <end position="55"/>
    </location>
</feature>
<feature type="helix" evidence="18">
    <location>
        <begin position="58"/>
        <end position="61"/>
    </location>
</feature>
<feature type="strand" evidence="18">
    <location>
        <begin position="62"/>
        <end position="69"/>
    </location>
</feature>
<feature type="helix" evidence="18">
    <location>
        <begin position="70"/>
        <end position="74"/>
    </location>
</feature>
<feature type="helix" evidence="18">
    <location>
        <begin position="77"/>
        <end position="79"/>
    </location>
</feature>
<feature type="strand" evidence="18">
    <location>
        <begin position="82"/>
        <end position="92"/>
    </location>
</feature>
<feature type="strand" evidence="18">
    <location>
        <begin position="95"/>
        <end position="105"/>
    </location>
</feature>
<feature type="helix" evidence="18">
    <location>
        <begin position="107"/>
        <end position="113"/>
    </location>
</feature>
<feature type="strand" evidence="18">
    <location>
        <begin position="116"/>
        <end position="118"/>
    </location>
</feature>
<feature type="strand" evidence="18">
    <location>
        <begin position="120"/>
        <end position="128"/>
    </location>
</feature>
<feature type="strand" evidence="16">
    <location>
        <begin position="130"/>
        <end position="132"/>
    </location>
</feature>
<feature type="strand" evidence="18">
    <location>
        <begin position="134"/>
        <end position="143"/>
    </location>
</feature>
<feature type="helix" evidence="18">
    <location>
        <begin position="158"/>
        <end position="175"/>
    </location>
</feature>
<feature type="strand" evidence="18">
    <location>
        <begin position="176"/>
        <end position="179"/>
    </location>
</feature>
<feature type="helix" evidence="18">
    <location>
        <begin position="181"/>
        <end position="188"/>
    </location>
</feature>
<feature type="turn" evidence="18">
    <location>
        <begin position="189"/>
        <end position="191"/>
    </location>
</feature>
<feature type="helix" evidence="18">
    <location>
        <begin position="192"/>
        <end position="201"/>
    </location>
</feature>
<feature type="turn" evidence="18">
    <location>
        <begin position="202"/>
        <end position="204"/>
    </location>
</feature>
<feature type="strand" evidence="18">
    <location>
        <begin position="207"/>
        <end position="219"/>
    </location>
</feature>
<feature type="helix" evidence="18">
    <location>
        <begin position="225"/>
        <end position="231"/>
    </location>
</feature>
<protein>
    <recommendedName>
        <fullName evidence="2 8">Small ribosomal subunit protein eS1A</fullName>
    </recommendedName>
    <alternativeName>
        <fullName evidence="9">40S ribosomal protein S1-A</fullName>
    </alternativeName>
    <alternativeName>
        <fullName>RP10A</fullName>
    </alternativeName>
</protein>
<organism>
    <name type="scientific">Saccharomyces cerevisiae (strain ATCC 204508 / S288c)</name>
    <name type="common">Baker's yeast</name>
    <dbReference type="NCBI Taxonomy" id="559292"/>
    <lineage>
        <taxon>Eukaryota</taxon>
        <taxon>Fungi</taxon>
        <taxon>Dikarya</taxon>
        <taxon>Ascomycota</taxon>
        <taxon>Saccharomycotina</taxon>
        <taxon>Saccharomycetes</taxon>
        <taxon>Saccharomycetales</taxon>
        <taxon>Saccharomycetaceae</taxon>
        <taxon>Saccharomyces</taxon>
    </lineage>
</organism>
<keyword id="KW-0002">3D-structure</keyword>
<keyword id="KW-0007">Acetylation</keyword>
<keyword id="KW-0963">Cytoplasm</keyword>
<keyword id="KW-1017">Isopeptide bond</keyword>
<keyword id="KW-0597">Phosphoprotein</keyword>
<keyword id="KW-1185">Reference proteome</keyword>
<keyword id="KW-0687">Ribonucleoprotein</keyword>
<keyword id="KW-0689">Ribosomal protein</keyword>
<keyword id="KW-0832">Ubl conjugation</keyword>